<name>GLMM_RHOPT</name>
<feature type="chain" id="PRO_1000201131" description="Phosphoglucosamine mutase">
    <location>
        <begin position="1"/>
        <end position="450"/>
    </location>
</feature>
<feature type="active site" description="Phosphoserine intermediate" evidence="1">
    <location>
        <position position="101"/>
    </location>
</feature>
<feature type="binding site" description="via phosphate group" evidence="1">
    <location>
        <position position="101"/>
    </location>
    <ligand>
        <name>Mg(2+)</name>
        <dbReference type="ChEBI" id="CHEBI:18420"/>
    </ligand>
</feature>
<feature type="binding site" evidence="1">
    <location>
        <position position="242"/>
    </location>
    <ligand>
        <name>Mg(2+)</name>
        <dbReference type="ChEBI" id="CHEBI:18420"/>
    </ligand>
</feature>
<feature type="binding site" evidence="1">
    <location>
        <position position="244"/>
    </location>
    <ligand>
        <name>Mg(2+)</name>
        <dbReference type="ChEBI" id="CHEBI:18420"/>
    </ligand>
</feature>
<feature type="binding site" evidence="1">
    <location>
        <position position="246"/>
    </location>
    <ligand>
        <name>Mg(2+)</name>
        <dbReference type="ChEBI" id="CHEBI:18420"/>
    </ligand>
</feature>
<feature type="modified residue" description="Phosphoserine" evidence="1">
    <location>
        <position position="101"/>
    </location>
</feature>
<organism>
    <name type="scientific">Rhodopseudomonas palustris (strain TIE-1)</name>
    <dbReference type="NCBI Taxonomy" id="395960"/>
    <lineage>
        <taxon>Bacteria</taxon>
        <taxon>Pseudomonadati</taxon>
        <taxon>Pseudomonadota</taxon>
        <taxon>Alphaproteobacteria</taxon>
        <taxon>Hyphomicrobiales</taxon>
        <taxon>Nitrobacteraceae</taxon>
        <taxon>Rhodopseudomonas</taxon>
    </lineage>
</organism>
<dbReference type="EC" id="5.4.2.10" evidence="1"/>
<dbReference type="EMBL" id="CP001096">
    <property type="protein sequence ID" value="ACF03288.1"/>
    <property type="molecule type" value="Genomic_DNA"/>
</dbReference>
<dbReference type="RefSeq" id="WP_012497528.1">
    <property type="nucleotide sequence ID" value="NC_011004.1"/>
</dbReference>
<dbReference type="SMR" id="B3Q6Y9"/>
<dbReference type="KEGG" id="rpt:Rpal_4798"/>
<dbReference type="HOGENOM" id="CLU_016950_7_0_5"/>
<dbReference type="OrthoDB" id="9803322at2"/>
<dbReference type="Proteomes" id="UP000001725">
    <property type="component" value="Chromosome"/>
</dbReference>
<dbReference type="GO" id="GO:0005829">
    <property type="term" value="C:cytosol"/>
    <property type="evidence" value="ECO:0007669"/>
    <property type="project" value="TreeGrafter"/>
</dbReference>
<dbReference type="GO" id="GO:0000287">
    <property type="term" value="F:magnesium ion binding"/>
    <property type="evidence" value="ECO:0007669"/>
    <property type="project" value="UniProtKB-UniRule"/>
</dbReference>
<dbReference type="GO" id="GO:0008966">
    <property type="term" value="F:phosphoglucosamine mutase activity"/>
    <property type="evidence" value="ECO:0007669"/>
    <property type="project" value="UniProtKB-UniRule"/>
</dbReference>
<dbReference type="GO" id="GO:0004615">
    <property type="term" value="F:phosphomannomutase activity"/>
    <property type="evidence" value="ECO:0007669"/>
    <property type="project" value="TreeGrafter"/>
</dbReference>
<dbReference type="GO" id="GO:0005975">
    <property type="term" value="P:carbohydrate metabolic process"/>
    <property type="evidence" value="ECO:0007669"/>
    <property type="project" value="InterPro"/>
</dbReference>
<dbReference type="GO" id="GO:0009252">
    <property type="term" value="P:peptidoglycan biosynthetic process"/>
    <property type="evidence" value="ECO:0007669"/>
    <property type="project" value="TreeGrafter"/>
</dbReference>
<dbReference type="GO" id="GO:0006048">
    <property type="term" value="P:UDP-N-acetylglucosamine biosynthetic process"/>
    <property type="evidence" value="ECO:0007669"/>
    <property type="project" value="TreeGrafter"/>
</dbReference>
<dbReference type="CDD" id="cd05802">
    <property type="entry name" value="GlmM"/>
    <property type="match status" value="1"/>
</dbReference>
<dbReference type="FunFam" id="3.30.310.50:FF:000001">
    <property type="entry name" value="Phosphoglucosamine mutase"/>
    <property type="match status" value="1"/>
</dbReference>
<dbReference type="FunFam" id="3.40.120.10:FF:000001">
    <property type="entry name" value="Phosphoglucosamine mutase"/>
    <property type="match status" value="1"/>
</dbReference>
<dbReference type="FunFam" id="3.40.120.10:FF:000003">
    <property type="entry name" value="Phosphoglucosamine mutase"/>
    <property type="match status" value="1"/>
</dbReference>
<dbReference type="Gene3D" id="3.40.120.10">
    <property type="entry name" value="Alpha-D-Glucose-1,6-Bisphosphate, subunit A, domain 3"/>
    <property type="match status" value="3"/>
</dbReference>
<dbReference type="Gene3D" id="3.30.310.50">
    <property type="entry name" value="Alpha-D-phosphohexomutase, C-terminal domain"/>
    <property type="match status" value="1"/>
</dbReference>
<dbReference type="HAMAP" id="MF_01554_B">
    <property type="entry name" value="GlmM_B"/>
    <property type="match status" value="1"/>
</dbReference>
<dbReference type="InterPro" id="IPR005844">
    <property type="entry name" value="A-D-PHexomutase_a/b/a-I"/>
</dbReference>
<dbReference type="InterPro" id="IPR016055">
    <property type="entry name" value="A-D-PHexomutase_a/b/a-I/II/III"/>
</dbReference>
<dbReference type="InterPro" id="IPR005845">
    <property type="entry name" value="A-D-PHexomutase_a/b/a-II"/>
</dbReference>
<dbReference type="InterPro" id="IPR005846">
    <property type="entry name" value="A-D-PHexomutase_a/b/a-III"/>
</dbReference>
<dbReference type="InterPro" id="IPR005843">
    <property type="entry name" value="A-D-PHexomutase_C"/>
</dbReference>
<dbReference type="InterPro" id="IPR036900">
    <property type="entry name" value="A-D-PHexomutase_C_sf"/>
</dbReference>
<dbReference type="InterPro" id="IPR005841">
    <property type="entry name" value="Alpha-D-phosphohexomutase_SF"/>
</dbReference>
<dbReference type="InterPro" id="IPR006352">
    <property type="entry name" value="GlmM_bact"/>
</dbReference>
<dbReference type="InterPro" id="IPR050060">
    <property type="entry name" value="Phosphoglucosamine_mutase"/>
</dbReference>
<dbReference type="NCBIfam" id="TIGR01455">
    <property type="entry name" value="glmM"/>
    <property type="match status" value="1"/>
</dbReference>
<dbReference type="NCBIfam" id="NF008139">
    <property type="entry name" value="PRK10887.1"/>
    <property type="match status" value="1"/>
</dbReference>
<dbReference type="PANTHER" id="PTHR42946:SF1">
    <property type="entry name" value="PHOSPHOGLUCOMUTASE (ALPHA-D-GLUCOSE-1,6-BISPHOSPHATE-DEPENDENT)"/>
    <property type="match status" value="1"/>
</dbReference>
<dbReference type="PANTHER" id="PTHR42946">
    <property type="entry name" value="PHOSPHOHEXOSE MUTASE"/>
    <property type="match status" value="1"/>
</dbReference>
<dbReference type="Pfam" id="PF02878">
    <property type="entry name" value="PGM_PMM_I"/>
    <property type="match status" value="1"/>
</dbReference>
<dbReference type="Pfam" id="PF02879">
    <property type="entry name" value="PGM_PMM_II"/>
    <property type="match status" value="1"/>
</dbReference>
<dbReference type="Pfam" id="PF02880">
    <property type="entry name" value="PGM_PMM_III"/>
    <property type="match status" value="1"/>
</dbReference>
<dbReference type="Pfam" id="PF00408">
    <property type="entry name" value="PGM_PMM_IV"/>
    <property type="match status" value="1"/>
</dbReference>
<dbReference type="PRINTS" id="PR00509">
    <property type="entry name" value="PGMPMM"/>
</dbReference>
<dbReference type="SUPFAM" id="SSF55957">
    <property type="entry name" value="Phosphoglucomutase, C-terminal domain"/>
    <property type="match status" value="1"/>
</dbReference>
<dbReference type="SUPFAM" id="SSF53738">
    <property type="entry name" value="Phosphoglucomutase, first 3 domains"/>
    <property type="match status" value="3"/>
</dbReference>
<reference key="1">
    <citation type="submission" date="2008-05" db="EMBL/GenBank/DDBJ databases">
        <title>Complete sequence of Rhodopseudomonas palustris TIE-1.</title>
        <authorList>
            <consortium name="US DOE Joint Genome Institute"/>
            <person name="Lucas S."/>
            <person name="Copeland A."/>
            <person name="Lapidus A."/>
            <person name="Glavina del Rio T."/>
            <person name="Dalin E."/>
            <person name="Tice H."/>
            <person name="Pitluck S."/>
            <person name="Chain P."/>
            <person name="Malfatti S."/>
            <person name="Shin M."/>
            <person name="Vergez L."/>
            <person name="Lang D."/>
            <person name="Schmutz J."/>
            <person name="Larimer F."/>
            <person name="Land M."/>
            <person name="Hauser L."/>
            <person name="Kyrpides N."/>
            <person name="Mikhailova N."/>
            <person name="Emerson D."/>
            <person name="Newman D.K."/>
            <person name="Roden E."/>
            <person name="Richardson P."/>
        </authorList>
    </citation>
    <scope>NUCLEOTIDE SEQUENCE [LARGE SCALE GENOMIC DNA]</scope>
    <source>
        <strain>TIE-1</strain>
    </source>
</reference>
<proteinExistence type="inferred from homology"/>
<sequence length="450" mass="48402">MSRRYFGTDGIRGRANGLITPELALKVGQAAGLAFQRGEHRHRVVIGKDTRLSGYMIENALVAGFTSVGMDVLLVGPMPTPAVAMLTKSMRADLGVMISASHNLFEDNGIKLFGPLGYKLSDDVEKQIELMLDESLDKKLAQSASLGRARRIDGVHDRYIEFAKRTLPRELSLEGLRVVIDCANGAAYKVVPEALWELGADVISIGVEPDGFNINKECGSTAPQALCAKVREMRADIGIALDGDADRVILVDERGHVVDGDQLLAVIGQSWKEDGRLAKPGVVATVMSNLGLERFLAGEGIALLRTPVGDRYVLEQMLKDGYNVGGESSGHIILSDFNTTGDGFVAALQVLAMVQKLGRPVSEVCRRFDPLPQILKNVRYRSGRPLDDSGVISAIQDGEKRLNGHGRLLIRPSGTEPVIRVMGEGDDRDVVEEVVDSIVDALGNAAAAAA</sequence>
<keyword id="KW-0413">Isomerase</keyword>
<keyword id="KW-0460">Magnesium</keyword>
<keyword id="KW-0479">Metal-binding</keyword>
<keyword id="KW-0597">Phosphoprotein</keyword>
<evidence type="ECO:0000255" key="1">
    <source>
        <dbReference type="HAMAP-Rule" id="MF_01554"/>
    </source>
</evidence>
<protein>
    <recommendedName>
        <fullName evidence="1">Phosphoglucosamine mutase</fullName>
        <ecNumber evidence="1">5.4.2.10</ecNumber>
    </recommendedName>
</protein>
<accession>B3Q6Y9</accession>
<comment type="function">
    <text evidence="1">Catalyzes the conversion of glucosamine-6-phosphate to glucosamine-1-phosphate.</text>
</comment>
<comment type="catalytic activity">
    <reaction evidence="1">
        <text>alpha-D-glucosamine 1-phosphate = D-glucosamine 6-phosphate</text>
        <dbReference type="Rhea" id="RHEA:23424"/>
        <dbReference type="ChEBI" id="CHEBI:58516"/>
        <dbReference type="ChEBI" id="CHEBI:58725"/>
        <dbReference type="EC" id="5.4.2.10"/>
    </reaction>
</comment>
<comment type="cofactor">
    <cofactor evidence="1">
        <name>Mg(2+)</name>
        <dbReference type="ChEBI" id="CHEBI:18420"/>
    </cofactor>
    <text evidence="1">Binds 1 Mg(2+) ion per subunit.</text>
</comment>
<comment type="PTM">
    <text evidence="1">Activated by phosphorylation.</text>
</comment>
<comment type="similarity">
    <text evidence="1">Belongs to the phosphohexose mutase family.</text>
</comment>
<gene>
    <name evidence="1" type="primary">glmM</name>
    <name type="ordered locus">Rpal_4798</name>
</gene>